<proteinExistence type="inferred from homology"/>
<organism>
    <name type="scientific">Cronobacter sakazakii (strain ATCC BAA-894)</name>
    <name type="common">Enterobacter sakazakii</name>
    <dbReference type="NCBI Taxonomy" id="290339"/>
    <lineage>
        <taxon>Bacteria</taxon>
        <taxon>Pseudomonadati</taxon>
        <taxon>Pseudomonadota</taxon>
        <taxon>Gammaproteobacteria</taxon>
        <taxon>Enterobacterales</taxon>
        <taxon>Enterobacteriaceae</taxon>
        <taxon>Cronobacter</taxon>
    </lineage>
</organism>
<dbReference type="EC" id="2.7.11.33" evidence="1"/>
<dbReference type="EC" id="2.7.4.28" evidence="1"/>
<dbReference type="EMBL" id="CP000783">
    <property type="protein sequence ID" value="ABU77352.1"/>
    <property type="molecule type" value="Genomic_DNA"/>
</dbReference>
<dbReference type="RefSeq" id="WP_004387810.1">
    <property type="nucleotide sequence ID" value="NC_009778.1"/>
</dbReference>
<dbReference type="SMR" id="A7MP11"/>
<dbReference type="KEGG" id="esa:ESA_02103"/>
<dbReference type="HOGENOM" id="CLU_046206_1_0_6"/>
<dbReference type="Proteomes" id="UP000000260">
    <property type="component" value="Chromosome"/>
</dbReference>
<dbReference type="GO" id="GO:0043531">
    <property type="term" value="F:ADP binding"/>
    <property type="evidence" value="ECO:0007669"/>
    <property type="project" value="UniProtKB-UniRule"/>
</dbReference>
<dbReference type="GO" id="GO:0005524">
    <property type="term" value="F:ATP binding"/>
    <property type="evidence" value="ECO:0007669"/>
    <property type="project" value="InterPro"/>
</dbReference>
<dbReference type="GO" id="GO:0003677">
    <property type="term" value="F:DNA binding"/>
    <property type="evidence" value="ECO:0007669"/>
    <property type="project" value="InterPro"/>
</dbReference>
<dbReference type="GO" id="GO:0016776">
    <property type="term" value="F:phosphotransferase activity, phosphate group as acceptor"/>
    <property type="evidence" value="ECO:0007669"/>
    <property type="project" value="UniProtKB-UniRule"/>
</dbReference>
<dbReference type="GO" id="GO:0004674">
    <property type="term" value="F:protein serine/threonine kinase activity"/>
    <property type="evidence" value="ECO:0007669"/>
    <property type="project" value="UniProtKB-UniRule"/>
</dbReference>
<dbReference type="GO" id="GO:0006355">
    <property type="term" value="P:regulation of DNA-templated transcription"/>
    <property type="evidence" value="ECO:0007669"/>
    <property type="project" value="InterPro"/>
</dbReference>
<dbReference type="HAMAP" id="MF_01062">
    <property type="entry name" value="PSRP"/>
    <property type="match status" value="1"/>
</dbReference>
<dbReference type="InterPro" id="IPR005177">
    <property type="entry name" value="Kinase-pyrophosphorylase"/>
</dbReference>
<dbReference type="InterPro" id="IPR026530">
    <property type="entry name" value="PSRP"/>
</dbReference>
<dbReference type="InterPro" id="IPR008917">
    <property type="entry name" value="TF_DNA-bd_sf"/>
</dbReference>
<dbReference type="NCBIfam" id="NF003742">
    <property type="entry name" value="PRK05339.1"/>
    <property type="match status" value="1"/>
</dbReference>
<dbReference type="PANTHER" id="PTHR31756">
    <property type="entry name" value="PYRUVATE, PHOSPHATE DIKINASE REGULATORY PROTEIN 1, CHLOROPLASTIC"/>
    <property type="match status" value="1"/>
</dbReference>
<dbReference type="PANTHER" id="PTHR31756:SF3">
    <property type="entry name" value="PYRUVATE, PHOSPHATE DIKINASE REGULATORY PROTEIN 1, CHLOROPLASTIC"/>
    <property type="match status" value="1"/>
</dbReference>
<dbReference type="Pfam" id="PF03618">
    <property type="entry name" value="Kinase-PPPase"/>
    <property type="match status" value="1"/>
</dbReference>
<dbReference type="SUPFAM" id="SSF47454">
    <property type="entry name" value="A DNA-binding domain in eukaryotic transcription factors"/>
    <property type="match status" value="1"/>
</dbReference>
<comment type="function">
    <text evidence="1">Bifunctional serine/threonine kinase and phosphorylase involved in the regulation of the phosphoenolpyruvate synthase (PEPS) by catalyzing its phosphorylation/dephosphorylation.</text>
</comment>
<comment type="catalytic activity">
    <reaction evidence="1">
        <text>[pyruvate, water dikinase] + ADP = [pyruvate, water dikinase]-phosphate + AMP + H(+)</text>
        <dbReference type="Rhea" id="RHEA:46020"/>
        <dbReference type="Rhea" id="RHEA-COMP:11425"/>
        <dbReference type="Rhea" id="RHEA-COMP:11426"/>
        <dbReference type="ChEBI" id="CHEBI:15378"/>
        <dbReference type="ChEBI" id="CHEBI:43176"/>
        <dbReference type="ChEBI" id="CHEBI:68546"/>
        <dbReference type="ChEBI" id="CHEBI:456215"/>
        <dbReference type="ChEBI" id="CHEBI:456216"/>
        <dbReference type="EC" id="2.7.11.33"/>
    </reaction>
</comment>
<comment type="catalytic activity">
    <reaction evidence="1">
        <text>[pyruvate, water dikinase]-phosphate + phosphate + H(+) = [pyruvate, water dikinase] + diphosphate</text>
        <dbReference type="Rhea" id="RHEA:48580"/>
        <dbReference type="Rhea" id="RHEA-COMP:11425"/>
        <dbReference type="Rhea" id="RHEA-COMP:11426"/>
        <dbReference type="ChEBI" id="CHEBI:15378"/>
        <dbReference type="ChEBI" id="CHEBI:33019"/>
        <dbReference type="ChEBI" id="CHEBI:43176"/>
        <dbReference type="ChEBI" id="CHEBI:43474"/>
        <dbReference type="ChEBI" id="CHEBI:68546"/>
        <dbReference type="EC" id="2.7.4.28"/>
    </reaction>
</comment>
<comment type="similarity">
    <text evidence="1">Belongs to the pyruvate, phosphate/water dikinase regulatory protein family. PSRP subfamily.</text>
</comment>
<reference key="1">
    <citation type="journal article" date="2010" name="PLoS ONE">
        <title>Genome sequence of Cronobacter sakazakii BAA-894 and comparative genomic hybridization analysis with other Cronobacter species.</title>
        <authorList>
            <person name="Kucerova E."/>
            <person name="Clifton S.W."/>
            <person name="Xia X.Q."/>
            <person name="Long F."/>
            <person name="Porwollik S."/>
            <person name="Fulton L."/>
            <person name="Fronick C."/>
            <person name="Minx P."/>
            <person name="Kyung K."/>
            <person name="Warren W."/>
            <person name="Fulton R."/>
            <person name="Feng D."/>
            <person name="Wollam A."/>
            <person name="Shah N."/>
            <person name="Bhonagiri V."/>
            <person name="Nash W.E."/>
            <person name="Hallsworth-Pepin K."/>
            <person name="Wilson R.K."/>
            <person name="McClelland M."/>
            <person name="Forsythe S.J."/>
        </authorList>
    </citation>
    <scope>NUCLEOTIDE SEQUENCE [LARGE SCALE GENOMIC DNA]</scope>
    <source>
        <strain>ATCC BAA-894</strain>
    </source>
</reference>
<name>PSRP_CROS8</name>
<feature type="chain" id="PRO_0000316669" description="Putative phosphoenolpyruvate synthase regulatory protein">
    <location>
        <begin position="1"/>
        <end position="277"/>
    </location>
</feature>
<feature type="binding site" evidence="1">
    <location>
        <begin position="157"/>
        <end position="164"/>
    </location>
    <ligand>
        <name>ADP</name>
        <dbReference type="ChEBI" id="CHEBI:456216"/>
    </ligand>
</feature>
<sequence>MDNVVDRQVFYISDGTAITAEVLGHAVMSQFPVSINSITLPFVENESRARAVKEQIDAIYQQTGVRPLVFYSIVLPEVREIILQSQGFCQDIVQALVAPLQEELRLDPSPVAHRTHGLNPANLNKYDARIAAIDYTLAHDDGISMRNLDQAQVILLGVSRCGKTPTSLYLAMQFGIRAANYPFIADDMDNLNLPAALRPFQHKLFGLTINPERLAAIREERRENSRYASMRQCRMEVAEVEALYRKHQIRYINSTNYSVEEIATKILDIMGLNRRMY</sequence>
<gene>
    <name type="ordered locus">ESA_02103</name>
</gene>
<accession>A7MP11</accession>
<protein>
    <recommendedName>
        <fullName evidence="1">Putative phosphoenolpyruvate synthase regulatory protein</fullName>
        <shortName evidence="1">PEP synthase regulatory protein</shortName>
        <shortName evidence="1">PSRP</shortName>
        <ecNumber evidence="1">2.7.11.33</ecNumber>
        <ecNumber evidence="1">2.7.4.28</ecNumber>
    </recommendedName>
    <alternativeName>
        <fullName evidence="1">Pyruvate, water dikinase regulatory protein</fullName>
    </alternativeName>
</protein>
<keyword id="KW-0418">Kinase</keyword>
<keyword id="KW-0547">Nucleotide-binding</keyword>
<keyword id="KW-1185">Reference proteome</keyword>
<keyword id="KW-0723">Serine/threonine-protein kinase</keyword>
<keyword id="KW-0808">Transferase</keyword>
<evidence type="ECO:0000255" key="1">
    <source>
        <dbReference type="HAMAP-Rule" id="MF_01062"/>
    </source>
</evidence>